<sequence length="154" mass="16145">MSAPVILVDADACPVKEEIYRVAWRHGAKVKVVSNSRLRVPDHPLIERVVVSDGFDAADDWIAEAANAQSIVVTADILLADRALKAGASVLAPNGKPFTLASIGPAIATRAIMADLRAGMGEGVGGPPPFSKADRARFLQALDAALVRVKRGLA</sequence>
<keyword id="KW-1185">Reference proteome</keyword>
<feature type="chain" id="PRO_1000014448" description="UPF0178 protein Sala_2376">
    <location>
        <begin position="1"/>
        <end position="154"/>
    </location>
</feature>
<name>Y2376_SPHAL</name>
<dbReference type="EMBL" id="CP000356">
    <property type="protein sequence ID" value="ABF54085.1"/>
    <property type="molecule type" value="Genomic_DNA"/>
</dbReference>
<dbReference type="RefSeq" id="WP_011542660.1">
    <property type="nucleotide sequence ID" value="NC_008048.1"/>
</dbReference>
<dbReference type="STRING" id="317655.Sala_2376"/>
<dbReference type="KEGG" id="sal:Sala_2376"/>
<dbReference type="eggNOG" id="COG1671">
    <property type="taxonomic scope" value="Bacteria"/>
</dbReference>
<dbReference type="HOGENOM" id="CLU_106619_2_1_5"/>
<dbReference type="OrthoDB" id="9798918at2"/>
<dbReference type="Proteomes" id="UP000006578">
    <property type="component" value="Chromosome"/>
</dbReference>
<dbReference type="HAMAP" id="MF_00489">
    <property type="entry name" value="UPF0178"/>
    <property type="match status" value="1"/>
</dbReference>
<dbReference type="InterPro" id="IPR003791">
    <property type="entry name" value="UPF0178"/>
</dbReference>
<dbReference type="NCBIfam" id="NF001095">
    <property type="entry name" value="PRK00124.1"/>
    <property type="match status" value="1"/>
</dbReference>
<dbReference type="PANTHER" id="PTHR35146">
    <property type="entry name" value="UPF0178 PROTEIN YAII"/>
    <property type="match status" value="1"/>
</dbReference>
<dbReference type="PANTHER" id="PTHR35146:SF1">
    <property type="entry name" value="UPF0178 PROTEIN YAII"/>
    <property type="match status" value="1"/>
</dbReference>
<dbReference type="Pfam" id="PF02639">
    <property type="entry name" value="DUF188"/>
    <property type="match status" value="1"/>
</dbReference>
<reference key="1">
    <citation type="journal article" date="2009" name="Proc. Natl. Acad. Sci. U.S.A.">
        <title>The genomic basis of trophic strategy in marine bacteria.</title>
        <authorList>
            <person name="Lauro F.M."/>
            <person name="McDougald D."/>
            <person name="Thomas T."/>
            <person name="Williams T.J."/>
            <person name="Egan S."/>
            <person name="Rice S."/>
            <person name="DeMaere M.Z."/>
            <person name="Ting L."/>
            <person name="Ertan H."/>
            <person name="Johnson J."/>
            <person name="Ferriera S."/>
            <person name="Lapidus A."/>
            <person name="Anderson I."/>
            <person name="Kyrpides N."/>
            <person name="Munk A.C."/>
            <person name="Detter C."/>
            <person name="Han C.S."/>
            <person name="Brown M.V."/>
            <person name="Robb F.T."/>
            <person name="Kjelleberg S."/>
            <person name="Cavicchioli R."/>
        </authorList>
    </citation>
    <scope>NUCLEOTIDE SEQUENCE [LARGE SCALE GENOMIC DNA]</scope>
    <source>
        <strain>DSM 13593 / LMG 18877 / RB2256</strain>
    </source>
</reference>
<gene>
    <name type="ordered locus">Sala_2376</name>
</gene>
<proteinExistence type="inferred from homology"/>
<comment type="similarity">
    <text evidence="1">Belongs to the UPF0178 family.</text>
</comment>
<evidence type="ECO:0000255" key="1">
    <source>
        <dbReference type="HAMAP-Rule" id="MF_00489"/>
    </source>
</evidence>
<organism>
    <name type="scientific">Sphingopyxis alaskensis (strain DSM 13593 / LMG 18877 / RB2256)</name>
    <name type="common">Sphingomonas alaskensis</name>
    <dbReference type="NCBI Taxonomy" id="317655"/>
    <lineage>
        <taxon>Bacteria</taxon>
        <taxon>Pseudomonadati</taxon>
        <taxon>Pseudomonadota</taxon>
        <taxon>Alphaproteobacteria</taxon>
        <taxon>Sphingomonadales</taxon>
        <taxon>Sphingomonadaceae</taxon>
        <taxon>Sphingopyxis</taxon>
    </lineage>
</organism>
<accession>Q1GQI7</accession>
<protein>
    <recommendedName>
        <fullName evidence="1">UPF0178 protein Sala_2376</fullName>
    </recommendedName>
</protein>